<keyword id="KW-0067">ATP-binding</keyword>
<keyword id="KW-0963">Cytoplasm</keyword>
<keyword id="KW-0418">Kinase</keyword>
<keyword id="KW-0547">Nucleotide-binding</keyword>
<keyword id="KW-0808">Transferase</keyword>
<proteinExistence type="inferred from homology"/>
<accession>Q1CCZ3</accession>
<accession>D1Q2H0</accession>
<comment type="function">
    <text evidence="1">Essential for recycling GMP and indirectly, cGMP.</text>
</comment>
<comment type="catalytic activity">
    <reaction evidence="1">
        <text>GMP + ATP = GDP + ADP</text>
        <dbReference type="Rhea" id="RHEA:20780"/>
        <dbReference type="ChEBI" id="CHEBI:30616"/>
        <dbReference type="ChEBI" id="CHEBI:58115"/>
        <dbReference type="ChEBI" id="CHEBI:58189"/>
        <dbReference type="ChEBI" id="CHEBI:456216"/>
        <dbReference type="EC" id="2.7.4.8"/>
    </reaction>
</comment>
<comment type="subcellular location">
    <subcellularLocation>
        <location evidence="1">Cytoplasm</location>
    </subcellularLocation>
</comment>
<comment type="similarity">
    <text evidence="1">Belongs to the guanylate kinase family.</text>
</comment>
<evidence type="ECO:0000255" key="1">
    <source>
        <dbReference type="HAMAP-Rule" id="MF_00328"/>
    </source>
</evidence>
<gene>
    <name evidence="1" type="primary">gmk</name>
    <name type="ordered locus">YPN_3810</name>
    <name type="ORF">YP516_4330</name>
</gene>
<organism>
    <name type="scientific">Yersinia pestis bv. Antiqua (strain Nepal516)</name>
    <dbReference type="NCBI Taxonomy" id="377628"/>
    <lineage>
        <taxon>Bacteria</taxon>
        <taxon>Pseudomonadati</taxon>
        <taxon>Pseudomonadota</taxon>
        <taxon>Gammaproteobacteria</taxon>
        <taxon>Enterobacterales</taxon>
        <taxon>Yersiniaceae</taxon>
        <taxon>Yersinia</taxon>
    </lineage>
</organism>
<sequence>MVQGTLYIVSAPSGAGKSSLIQALLKTQPLYDTQVSISHTTRAKRPGENHGEHYFFVSEKEFCQMIDDDAFLEHAKVFENYYGTSRLAIEQVLATGVDVFLDIDWQGAQQIRAKMPTARSIFILPPSKTELDRRLRGRGQDSEEVIAKRMEQAVAEMAHYAEYDYLIVNDDFNLALSDLKTIIRAERLRLGRQKQRHDALISKLLAD</sequence>
<name>KGUA_YERPN</name>
<protein>
    <recommendedName>
        <fullName evidence="1">Guanylate kinase</fullName>
        <ecNumber evidence="1">2.7.4.8</ecNumber>
    </recommendedName>
    <alternativeName>
        <fullName evidence="1">GMP kinase</fullName>
    </alternativeName>
</protein>
<dbReference type="EC" id="2.7.4.8" evidence="1"/>
<dbReference type="EMBL" id="CP000305">
    <property type="protein sequence ID" value="ABG20137.1"/>
    <property type="molecule type" value="Genomic_DNA"/>
</dbReference>
<dbReference type="EMBL" id="ACNQ01000019">
    <property type="protein sequence ID" value="EEO74723.1"/>
    <property type="molecule type" value="Genomic_DNA"/>
</dbReference>
<dbReference type="RefSeq" id="WP_002209000.1">
    <property type="nucleotide sequence ID" value="NZ_ACNQ01000019.1"/>
</dbReference>
<dbReference type="SMR" id="Q1CCZ3"/>
<dbReference type="GeneID" id="96663512"/>
<dbReference type="KEGG" id="ypn:YPN_3810"/>
<dbReference type="HOGENOM" id="CLU_001715_1_0_6"/>
<dbReference type="Proteomes" id="UP000008936">
    <property type="component" value="Chromosome"/>
</dbReference>
<dbReference type="GO" id="GO:0005829">
    <property type="term" value="C:cytosol"/>
    <property type="evidence" value="ECO:0007669"/>
    <property type="project" value="TreeGrafter"/>
</dbReference>
<dbReference type="GO" id="GO:0005524">
    <property type="term" value="F:ATP binding"/>
    <property type="evidence" value="ECO:0007669"/>
    <property type="project" value="UniProtKB-UniRule"/>
</dbReference>
<dbReference type="GO" id="GO:0004385">
    <property type="term" value="F:guanylate kinase activity"/>
    <property type="evidence" value="ECO:0007669"/>
    <property type="project" value="UniProtKB-UniRule"/>
</dbReference>
<dbReference type="CDD" id="cd00071">
    <property type="entry name" value="GMPK"/>
    <property type="match status" value="1"/>
</dbReference>
<dbReference type="FunFam" id="3.40.50.300:FF:000855">
    <property type="entry name" value="Guanylate kinase"/>
    <property type="match status" value="1"/>
</dbReference>
<dbReference type="FunFam" id="3.30.63.10:FF:000002">
    <property type="entry name" value="Guanylate kinase 1"/>
    <property type="match status" value="1"/>
</dbReference>
<dbReference type="Gene3D" id="3.30.63.10">
    <property type="entry name" value="Guanylate Kinase phosphate binding domain"/>
    <property type="match status" value="1"/>
</dbReference>
<dbReference type="Gene3D" id="3.40.50.300">
    <property type="entry name" value="P-loop containing nucleotide triphosphate hydrolases"/>
    <property type="match status" value="1"/>
</dbReference>
<dbReference type="HAMAP" id="MF_00328">
    <property type="entry name" value="Guanylate_kinase"/>
    <property type="match status" value="1"/>
</dbReference>
<dbReference type="InterPro" id="IPR008145">
    <property type="entry name" value="GK/Ca_channel_bsu"/>
</dbReference>
<dbReference type="InterPro" id="IPR008144">
    <property type="entry name" value="Guanylate_kin-like_dom"/>
</dbReference>
<dbReference type="InterPro" id="IPR017665">
    <property type="entry name" value="Guanylate_kinase"/>
</dbReference>
<dbReference type="InterPro" id="IPR020590">
    <property type="entry name" value="Guanylate_kinase_CS"/>
</dbReference>
<dbReference type="InterPro" id="IPR027417">
    <property type="entry name" value="P-loop_NTPase"/>
</dbReference>
<dbReference type="NCBIfam" id="TIGR03263">
    <property type="entry name" value="guanyl_kin"/>
    <property type="match status" value="1"/>
</dbReference>
<dbReference type="PANTHER" id="PTHR23117:SF13">
    <property type="entry name" value="GUANYLATE KINASE"/>
    <property type="match status" value="1"/>
</dbReference>
<dbReference type="PANTHER" id="PTHR23117">
    <property type="entry name" value="GUANYLATE KINASE-RELATED"/>
    <property type="match status" value="1"/>
</dbReference>
<dbReference type="Pfam" id="PF00625">
    <property type="entry name" value="Guanylate_kin"/>
    <property type="match status" value="1"/>
</dbReference>
<dbReference type="SMART" id="SM00072">
    <property type="entry name" value="GuKc"/>
    <property type="match status" value="1"/>
</dbReference>
<dbReference type="SUPFAM" id="SSF52540">
    <property type="entry name" value="P-loop containing nucleoside triphosphate hydrolases"/>
    <property type="match status" value="1"/>
</dbReference>
<dbReference type="PROSITE" id="PS00856">
    <property type="entry name" value="GUANYLATE_KINASE_1"/>
    <property type="match status" value="1"/>
</dbReference>
<dbReference type="PROSITE" id="PS50052">
    <property type="entry name" value="GUANYLATE_KINASE_2"/>
    <property type="match status" value="1"/>
</dbReference>
<reference key="1">
    <citation type="journal article" date="2006" name="J. Bacteriol.">
        <title>Complete genome sequence of Yersinia pestis strains Antiqua and Nepal516: evidence of gene reduction in an emerging pathogen.</title>
        <authorList>
            <person name="Chain P.S.G."/>
            <person name="Hu P."/>
            <person name="Malfatti S.A."/>
            <person name="Radnedge L."/>
            <person name="Larimer F."/>
            <person name="Vergez L.M."/>
            <person name="Worsham P."/>
            <person name="Chu M.C."/>
            <person name="Andersen G.L."/>
        </authorList>
    </citation>
    <scope>NUCLEOTIDE SEQUENCE [LARGE SCALE GENOMIC DNA]</scope>
    <source>
        <strain>Nepal516</strain>
    </source>
</reference>
<reference key="2">
    <citation type="submission" date="2009-04" db="EMBL/GenBank/DDBJ databases">
        <title>Yersinia pestis Nepal516A whole genome shotgun sequencing project.</title>
        <authorList>
            <person name="Plunkett G. III"/>
            <person name="Anderson B.D."/>
            <person name="Baumler D.J."/>
            <person name="Burland V."/>
            <person name="Cabot E.L."/>
            <person name="Glasner J.D."/>
            <person name="Mau B."/>
            <person name="Neeno-Eckwall E."/>
            <person name="Perna N.T."/>
            <person name="Munk A.C."/>
            <person name="Tapia R."/>
            <person name="Green L.D."/>
            <person name="Rogers Y.C."/>
            <person name="Detter J.C."/>
            <person name="Bruce D.C."/>
            <person name="Brettin T.S."/>
        </authorList>
    </citation>
    <scope>NUCLEOTIDE SEQUENCE [LARGE SCALE GENOMIC DNA]</scope>
    <source>
        <strain>Nepal516</strain>
    </source>
</reference>
<feature type="chain" id="PRO_0000266440" description="Guanylate kinase">
    <location>
        <begin position="1"/>
        <end position="207"/>
    </location>
</feature>
<feature type="domain" description="Guanylate kinase-like" evidence="1">
    <location>
        <begin position="4"/>
        <end position="184"/>
    </location>
</feature>
<feature type="binding site" evidence="1">
    <location>
        <begin position="11"/>
        <end position="18"/>
    </location>
    <ligand>
        <name>ATP</name>
        <dbReference type="ChEBI" id="CHEBI:30616"/>
    </ligand>
</feature>